<comment type="function">
    <text evidence="3">Catalyzes the carboxylation of beta-amyrin at the C-28 position to form oleanolate (PubMed:28194155). Catalyzes the carboxylation of alpha-amyrin at the C-28 position to form ursolate (PubMed:28194155).</text>
</comment>
<comment type="catalytic activity">
    <reaction evidence="3">
        <text>beta-amyrin + 3 reduced [NADPH--hemoprotein reductase] + 3 O2 = oleanolate + 3 oxidized [NADPH--hemoprotein reductase] + 4 H2O + 4 H(+)</text>
        <dbReference type="Rhea" id="RHEA:43068"/>
        <dbReference type="Rhea" id="RHEA-COMP:11964"/>
        <dbReference type="Rhea" id="RHEA-COMP:11965"/>
        <dbReference type="ChEBI" id="CHEBI:10352"/>
        <dbReference type="ChEBI" id="CHEBI:15377"/>
        <dbReference type="ChEBI" id="CHEBI:15378"/>
        <dbReference type="ChEBI" id="CHEBI:15379"/>
        <dbReference type="ChEBI" id="CHEBI:57618"/>
        <dbReference type="ChEBI" id="CHEBI:58210"/>
        <dbReference type="ChEBI" id="CHEBI:82828"/>
        <dbReference type="EC" id="1.14.14.126"/>
    </reaction>
    <physiologicalReaction direction="left-to-right" evidence="3">
        <dbReference type="Rhea" id="RHEA:43069"/>
    </physiologicalReaction>
</comment>
<comment type="cofactor">
    <cofactor evidence="1">
        <name>heme</name>
        <dbReference type="ChEBI" id="CHEBI:30413"/>
    </cofactor>
</comment>
<comment type="subcellular location">
    <subcellularLocation>
        <location evidence="2">Membrane</location>
        <topology evidence="2">Single-pass membrane protein</topology>
    </subcellularLocation>
</comment>
<comment type="tissue specificity">
    <text evidence="3">Specifically expressed in roots.</text>
</comment>
<comment type="similarity">
    <text evidence="4">Belongs to the cytochrome P450 family.</text>
</comment>
<accession>A0A3Q7HBJ5</accession>
<reference key="1">
    <citation type="journal article" date="2012" name="Nature">
        <title>The tomato genome sequence provides insights into fleshy fruit evolution.</title>
        <authorList>
            <consortium name="Tomato Genome Consortium"/>
        </authorList>
    </citation>
    <scope>NUCLEOTIDE SEQUENCE [LARGE SCALE GENOMIC DNA]</scope>
    <source>
        <strain>cv. Heinz 1706</strain>
    </source>
</reference>
<reference key="2">
    <citation type="journal article" date="2010" name="BMC Genomics">
        <title>Large-scale analysis of full-length cDNAs from the tomato (Solanum lycopersicum) cultivar Micro-Tom, a reference system for the Solanaceae genomics.</title>
        <authorList>
            <person name="Aoki K."/>
            <person name="Yano K."/>
            <person name="Suzuki A."/>
            <person name="Kawamura S."/>
            <person name="Sakurai N."/>
            <person name="Suda K."/>
            <person name="Kurabayashi A."/>
            <person name="Suzuki T."/>
            <person name="Tsugane T."/>
            <person name="Watanabe M."/>
            <person name="Ooga K."/>
            <person name="Torii M."/>
            <person name="Narita T."/>
            <person name="Shin-I T."/>
            <person name="Kohara Y."/>
            <person name="Yamamoto N."/>
            <person name="Takahashi H."/>
            <person name="Watanabe Y."/>
            <person name="Egusa M."/>
            <person name="Kodama M."/>
            <person name="Ichinose Y."/>
            <person name="Kikuchi M."/>
            <person name="Fukushima S."/>
            <person name="Okabe A."/>
            <person name="Arie T."/>
            <person name="Sato Y."/>
            <person name="Yazawa K."/>
            <person name="Satoh S."/>
            <person name="Omura T."/>
            <person name="Ezura H."/>
            <person name="Shibata D."/>
        </authorList>
    </citation>
    <scope>NUCLEOTIDE SEQUENCE [LARGE SCALE MRNA]</scope>
</reference>
<reference key="3">
    <citation type="journal article" date="2017" name="Front. Plant Sci.">
        <title>Functional characterization of CYP716 family P450 enzymes in triterpenoid biosynthesis in tomato.</title>
        <authorList>
            <person name="Yasumoto S."/>
            <person name="Seki H."/>
            <person name="Shimizu Y."/>
            <person name="Fukushima E.O."/>
            <person name="Muranaka T."/>
        </authorList>
    </citation>
    <scope>FUNCTION</scope>
    <scope>CATALYTIC ACTIVITY</scope>
    <scope>TISSUE SPECIFICITY</scope>
</reference>
<feature type="chain" id="PRO_0000451600" description="Beta-amyrin 28-monooxygenase">
    <location>
        <begin position="1"/>
        <end position="476"/>
    </location>
</feature>
<feature type="transmembrane region" description="Helical" evidence="2">
    <location>
        <begin position="2"/>
        <end position="22"/>
    </location>
</feature>
<feature type="binding site" description="axial binding residue" evidence="1">
    <location>
        <position position="421"/>
    </location>
    <ligand>
        <name>heme</name>
        <dbReference type="ChEBI" id="CHEBI:30413"/>
    </ligand>
    <ligandPart>
        <name>Fe</name>
        <dbReference type="ChEBI" id="CHEBI:18248"/>
    </ligandPart>
</feature>
<sequence length="476" mass="54258">MELLYVCLVCVFVFLVSLLLLYKKKSGEGLPPGKTGWPVFGESLEFLSSGWKGHPEKFIFDRVAKYSSSVFKTHLLGEEAAVFCGASANKFLFSNENKLVQAWWPNSVNKVFPSSTQTSSKEEAIKMRKMLPNFFKPEALQRYVGIMDHITQRHFATGWENKEQVVVFPLTKRYTFWLACRLFLSVEDPKHVAKFADPFDVLASGLISIPIDLPGTPFNRAIKASNFIRKELVRIIKQRKIDLGEGKVSSTQDILSHMLLTCDENGKFLGDLDIADKILGLLIGGHDTASSACSFIVKYLAELPHIYQRVYTEQMEIAKSKGPGELLRWEDIQKMKYSWNVACEVLRLAPPLQGAFREALSDFMFNGFYIPKGWKIYWSANSTHKREEFFPDPEKFDPSRFEGSGPAPYTFVPFGGGPRMCPGKEYARLEILVFMHHLVKRFKFEKIIPHEKIIVNPMPIPANGLPLRLYPHHHNP</sequence>
<gene>
    <name type="primary">CYP716A44</name>
</gene>
<evidence type="ECO:0000250" key="1">
    <source>
        <dbReference type="UniProtKB" id="Q94IP1"/>
    </source>
</evidence>
<evidence type="ECO:0000255" key="2"/>
<evidence type="ECO:0000269" key="3">
    <source>
    </source>
</evidence>
<evidence type="ECO:0000305" key="4"/>
<name>C7A44_SOLLC</name>
<keyword id="KW-0349">Heme</keyword>
<keyword id="KW-0408">Iron</keyword>
<keyword id="KW-0472">Membrane</keyword>
<keyword id="KW-0479">Metal-binding</keyword>
<keyword id="KW-0503">Monooxygenase</keyword>
<keyword id="KW-0560">Oxidoreductase</keyword>
<keyword id="KW-1185">Reference proteome</keyword>
<keyword id="KW-0812">Transmembrane</keyword>
<keyword id="KW-1133">Transmembrane helix</keyword>
<proteinExistence type="evidence at protein level"/>
<organism>
    <name type="scientific">Solanum lycopersicum</name>
    <name type="common">Tomato</name>
    <name type="synonym">Lycopersicon esculentum</name>
    <dbReference type="NCBI Taxonomy" id="4081"/>
    <lineage>
        <taxon>Eukaryota</taxon>
        <taxon>Viridiplantae</taxon>
        <taxon>Streptophyta</taxon>
        <taxon>Embryophyta</taxon>
        <taxon>Tracheophyta</taxon>
        <taxon>Spermatophyta</taxon>
        <taxon>Magnoliopsida</taxon>
        <taxon>eudicotyledons</taxon>
        <taxon>Gunneridae</taxon>
        <taxon>Pentapetalae</taxon>
        <taxon>asterids</taxon>
        <taxon>lamiids</taxon>
        <taxon>Solanales</taxon>
        <taxon>Solanaceae</taxon>
        <taxon>Solanoideae</taxon>
        <taxon>Solaneae</taxon>
        <taxon>Solanum</taxon>
        <taxon>Solanum subgen. Lycopersicon</taxon>
    </lineage>
</organism>
<protein>
    <recommendedName>
        <fullName evidence="4">Beta-amyrin 28-monooxygenase</fullName>
        <ecNumber evidence="3">1.14.14.126</ecNumber>
    </recommendedName>
    <alternativeName>
        <fullName evidence="4">Beta-amyrin 28-oxidase</fullName>
    </alternativeName>
    <alternativeName>
        <fullName evidence="4">Cytochrome P450 716A44</fullName>
    </alternativeName>
</protein>
<dbReference type="EC" id="1.14.14.126" evidence="3"/>
<dbReference type="EMBL" id="AK329870">
    <property type="status" value="NOT_ANNOTATED_CDS"/>
    <property type="molecule type" value="mRNA"/>
</dbReference>
<dbReference type="RefSeq" id="XP_004239296.1">
    <property type="nucleotide sequence ID" value="XM_004239248.3"/>
</dbReference>
<dbReference type="SMR" id="A0A3Q7HBJ5"/>
<dbReference type="FunCoup" id="A0A3Q7HBJ5">
    <property type="interactions" value="148"/>
</dbReference>
<dbReference type="STRING" id="4081.A0A3Q7HBJ5"/>
<dbReference type="PaxDb" id="4081-Solyc05g021390.2.1"/>
<dbReference type="EnsemblPlants" id="Solyc05g021390.3.1">
    <property type="protein sequence ID" value="Solyc05g021390.3.1"/>
    <property type="gene ID" value="Solyc05g021390.3"/>
</dbReference>
<dbReference type="Gramene" id="Solyc05g021390.3.1">
    <property type="protein sequence ID" value="Solyc05g021390.3.1"/>
    <property type="gene ID" value="Solyc05g021390.3"/>
</dbReference>
<dbReference type="InParanoid" id="A0A3Q7HBJ5"/>
<dbReference type="OMA" id="QAWWPNS"/>
<dbReference type="OrthoDB" id="1372046at2759"/>
<dbReference type="BRENDA" id="1.14.14.126">
    <property type="organism ID" value="3101"/>
</dbReference>
<dbReference type="Proteomes" id="UP000004994">
    <property type="component" value="Chromosome 5"/>
</dbReference>
<dbReference type="GO" id="GO:0016020">
    <property type="term" value="C:membrane"/>
    <property type="evidence" value="ECO:0007669"/>
    <property type="project" value="UniProtKB-SubCell"/>
</dbReference>
<dbReference type="GO" id="GO:0102373">
    <property type="term" value="F:beta-amyrin 28-monooxygenase activity"/>
    <property type="evidence" value="ECO:0007669"/>
    <property type="project" value="UniProtKB-EC"/>
</dbReference>
<dbReference type="GO" id="GO:0020037">
    <property type="term" value="F:heme binding"/>
    <property type="evidence" value="ECO:0007669"/>
    <property type="project" value="InterPro"/>
</dbReference>
<dbReference type="GO" id="GO:0005506">
    <property type="term" value="F:iron ion binding"/>
    <property type="evidence" value="ECO:0007669"/>
    <property type="project" value="InterPro"/>
</dbReference>
<dbReference type="GO" id="GO:0004497">
    <property type="term" value="F:monooxygenase activity"/>
    <property type="evidence" value="ECO:0000318"/>
    <property type="project" value="GO_Central"/>
</dbReference>
<dbReference type="GO" id="GO:0016712">
    <property type="term" value="F:oxidoreductase activity, acting on paired donors, with incorporation or reduction of molecular oxygen, reduced flavin or flavoprotein as one donor, and incorporation of one atom of oxygen"/>
    <property type="evidence" value="ECO:0000314"/>
    <property type="project" value="UniProtKB"/>
</dbReference>
<dbReference type="CDD" id="cd11043">
    <property type="entry name" value="CYP90-like"/>
    <property type="match status" value="1"/>
</dbReference>
<dbReference type="FunFam" id="1.10.630.10:FF:000022">
    <property type="entry name" value="Taxadiene 5-alpha hydroxylase"/>
    <property type="match status" value="1"/>
</dbReference>
<dbReference type="Gene3D" id="1.10.630.10">
    <property type="entry name" value="Cytochrome P450"/>
    <property type="match status" value="1"/>
</dbReference>
<dbReference type="InterPro" id="IPR001128">
    <property type="entry name" value="Cyt_P450"/>
</dbReference>
<dbReference type="InterPro" id="IPR017972">
    <property type="entry name" value="Cyt_P450_CS"/>
</dbReference>
<dbReference type="InterPro" id="IPR002401">
    <property type="entry name" value="Cyt_P450_E_grp-I"/>
</dbReference>
<dbReference type="InterPro" id="IPR036396">
    <property type="entry name" value="Cyt_P450_sf"/>
</dbReference>
<dbReference type="PANTHER" id="PTHR24286:SF331">
    <property type="entry name" value="BETA-AMYRIN 28-MONOOXYGENASE"/>
    <property type="match status" value="1"/>
</dbReference>
<dbReference type="PANTHER" id="PTHR24286">
    <property type="entry name" value="CYTOCHROME P450 26"/>
    <property type="match status" value="1"/>
</dbReference>
<dbReference type="Pfam" id="PF00067">
    <property type="entry name" value="p450"/>
    <property type="match status" value="1"/>
</dbReference>
<dbReference type="PRINTS" id="PR00463">
    <property type="entry name" value="EP450I"/>
</dbReference>
<dbReference type="PRINTS" id="PR00385">
    <property type="entry name" value="P450"/>
</dbReference>
<dbReference type="SUPFAM" id="SSF48264">
    <property type="entry name" value="Cytochrome P450"/>
    <property type="match status" value="1"/>
</dbReference>
<dbReference type="PROSITE" id="PS00086">
    <property type="entry name" value="CYTOCHROME_P450"/>
    <property type="match status" value="1"/>
</dbReference>